<reference key="1">
    <citation type="journal article" date="1990" name="J. Virol.">
        <title>Comparison of two host cell range variants of feline immunodeficiency virus.</title>
        <authorList>
            <person name="Phillips T.R."/>
            <person name="Talbott R.L."/>
            <person name="Lamont C."/>
            <person name="Muir S."/>
            <person name="Lovelace K.M."/>
            <person name="Elder J.H."/>
        </authorList>
    </citation>
    <scope>NUCLEOTIDE SEQUENCE [GENOMIC RNA]</scope>
    <source>
        <strain>Isolate PPR</strain>
    </source>
</reference>
<reference key="2">
    <citation type="journal article" date="1992" name="J. Virol.">
        <title>Identification of the Rev transactivation and Rev-responsive elements of feline immunodeficiency virus.</title>
        <authorList>
            <person name="Phillips T.R."/>
            <person name="Lamont C."/>
            <person name="Konings D.A.M."/>
            <person name="Shacklett B.L."/>
            <person name="Hamson C.A."/>
            <person name="Luciw P.A."/>
            <person name="Elder J.H."/>
        </authorList>
    </citation>
    <scope>NUCLEOTIDE SEQUENCE [MRNA]</scope>
</reference>
<proteinExistence type="evidence at transcript level"/>
<organism>
    <name type="scientific">Feline immunodeficiency virus (strain San Diego)</name>
    <name type="common">FIV</name>
    <dbReference type="NCBI Taxonomy" id="11675"/>
    <lineage>
        <taxon>Viruses</taxon>
        <taxon>Riboviria</taxon>
        <taxon>Pararnavirae</taxon>
        <taxon>Artverviricota</taxon>
        <taxon>Revtraviricetes</taxon>
        <taxon>Ortervirales</taxon>
        <taxon>Retroviridae</taxon>
        <taxon>Orthoretrovirinae</taxon>
        <taxon>Lentivirus</taxon>
        <taxon>Feline immunodeficiency virus</taxon>
    </lineage>
</organism>
<organismHost>
    <name type="scientific">Felidae</name>
    <name type="common">cat family</name>
    <dbReference type="NCBI Taxonomy" id="9681"/>
</organismHost>
<accession>P19032</accession>
<accession>Q90068</accession>
<sequence length="153" mass="18279">MAEGFAANRQWIGPEEAEELLDFDKATQMNEEGPLNPGVNPFRVPAVTEADKQEYCKILQPRLQEIRNEIQEVKLEEGNAGKMKKKRQRRRRKKKAFKKMMTDLEDRFRKLFGSPSKDEYTEIEIEEDPPKKEKRVDWDEYWDPEEIERMLMD</sequence>
<dbReference type="EMBL" id="M36968">
    <property type="protein sequence ID" value="AAA43081.1"/>
    <property type="status" value="ALT_SEQ"/>
    <property type="molecule type" value="Genomic_RNA"/>
</dbReference>
<dbReference type="EMBL" id="S42322">
    <property type="protein sequence ID" value="AAB22932.1"/>
    <property type="molecule type" value="mRNA"/>
</dbReference>
<dbReference type="PIR" id="B42748">
    <property type="entry name" value="B42748"/>
</dbReference>
<dbReference type="SMR" id="P19032"/>
<dbReference type="GO" id="GO:0030430">
    <property type="term" value="C:host cell cytoplasm"/>
    <property type="evidence" value="ECO:0007669"/>
    <property type="project" value="UniProtKB-SubCell"/>
</dbReference>
<dbReference type="GO" id="GO:0044196">
    <property type="term" value="C:host cell nucleolus"/>
    <property type="evidence" value="ECO:0007669"/>
    <property type="project" value="UniProtKB-SubCell"/>
</dbReference>
<dbReference type="GO" id="GO:0003723">
    <property type="term" value="F:RNA binding"/>
    <property type="evidence" value="ECO:0007669"/>
    <property type="project" value="UniProtKB-KW"/>
</dbReference>
<dbReference type="GO" id="GO:0051028">
    <property type="term" value="P:mRNA transport"/>
    <property type="evidence" value="ECO:0007669"/>
    <property type="project" value="UniProtKB-KW"/>
</dbReference>
<dbReference type="InterPro" id="IPR018582">
    <property type="entry name" value="Envelope_glycop_lentivirus"/>
</dbReference>
<dbReference type="Pfam" id="PF09590">
    <property type="entry name" value="Env-gp36"/>
    <property type="match status" value="1"/>
</dbReference>
<protein>
    <recommendedName>
        <fullName>Probable protein Rev</fullName>
    </recommendedName>
    <alternativeName>
        <fullName>3'ORF</fullName>
    </alternativeName>
    <alternativeName>
        <fullName>ART/TRS</fullName>
    </alternativeName>
    <alternativeName>
        <fullName>Anti-repression transactivator</fullName>
    </alternativeName>
    <alternativeName>
        <fullName>ORF4</fullName>
    </alternativeName>
    <alternativeName>
        <fullName>ORFH</fullName>
    </alternativeName>
    <alternativeName>
        <fullName>Regulator of expression of viral proteins</fullName>
    </alternativeName>
</protein>
<name>REV_FIVSD</name>
<evidence type="ECO:0000250" key="1"/>
<evidence type="ECO:0000256" key="2">
    <source>
        <dbReference type="SAM" id="MobiDB-lite"/>
    </source>
</evidence>
<evidence type="ECO:0000305" key="3"/>
<gene>
    <name type="primary">rev</name>
</gene>
<keyword id="KW-1035">Host cytoplasm</keyword>
<keyword id="KW-1048">Host nucleus</keyword>
<keyword id="KW-0509">mRNA transport</keyword>
<keyword id="KW-0694">RNA-binding</keyword>
<keyword id="KW-0813">Transport</keyword>
<comment type="function">
    <text evidence="1">Escorts unspliced or incompletely spliced viral pre-mRNAs (late transcripts) out of the nucleus of infected cells. These pre-mRNAs carry a recognition sequence called Rev responsive element (RRE) located in the env gene, that is not present in fully spliced viral mRNAs (early transcripts). This function is essential since most viral proteins are translated from unspliced or partially spliced pre-mRNAs which cannot exit the nucleus by the pathway used by fully processed cellular mRNAs (By similarity).</text>
</comment>
<comment type="subunit">
    <text evidence="1">Homomultimer; when bound to the RRE. Multimeric assembly is essential for activity (By similarity).</text>
</comment>
<comment type="subcellular location">
    <subcellularLocation>
        <location>Host nucleus</location>
        <location>Host nucleolus</location>
    </subcellularLocation>
    <subcellularLocation>
        <location>Host cytoplasm</location>
    </subcellularLocation>
    <text evidence="1">The presence of both nuclear import and nuclear export signals leads to continuous shuttling between the nucleus and cytoplasm.</text>
</comment>
<comment type="domain">
    <text evidence="1">The RNA-binding motif binds to the RRE, a stem-and-loop structure present in incompletely spliced viral pre-mRNAs. This region also contains the NLS which mediates nuclear localization. These overlapping functions prevent Rev bound to RRE from undesirable return to the nucleus. When Rev binds the RRE, the NLS becomes masked while the NES remains accessible (By similarity).</text>
</comment>
<comment type="caution">
    <text evidence="3">PubMed:1323707 sequence does not seem to originate from isolate Petaluma as described, but rather from the strain San Diego.</text>
</comment>
<comment type="sequence caution" evidence="3">
    <conflict type="erroneous gene model prediction">
        <sequence resource="EMBL-CDS" id="AAA43081"/>
    </conflict>
</comment>
<feature type="chain" id="PRO_0000085514" description="Probable protein Rev">
    <location>
        <begin position="1"/>
        <end position="153"/>
    </location>
</feature>
<feature type="region of interest" description="Disordered" evidence="2">
    <location>
        <begin position="24"/>
        <end position="43"/>
    </location>
</feature>
<feature type="region of interest" description="Disordered" evidence="2">
    <location>
        <begin position="78"/>
        <end position="97"/>
    </location>
</feature>
<feature type="short sequence motif" description="Nuclear localization signal and RNA-binding (RRE)" evidence="1">
    <location>
        <begin position="84"/>
        <end position="95"/>
    </location>
</feature>
<feature type="compositionally biased region" description="Basic residues" evidence="2">
    <location>
        <begin position="82"/>
        <end position="97"/>
    </location>
</feature>